<name>BLT3A_HUMAN</name>
<feature type="chain" id="PRO_0000065723" description="Bridge-like lipid transfer protein family member 3A">
    <location>
        <begin position="1"/>
        <end position="1440"/>
    </location>
</feature>
<feature type="domain" description="Chorein N-terminal" evidence="1">
    <location>
        <begin position="3"/>
        <end position="95"/>
    </location>
</feature>
<feature type="region of interest" description="Disordered" evidence="2">
    <location>
        <begin position="267"/>
        <end position="307"/>
    </location>
</feature>
<feature type="region of interest" description="Disordered" evidence="2">
    <location>
        <begin position="430"/>
        <end position="456"/>
    </location>
</feature>
<feature type="region of interest" description="Disordered" evidence="2">
    <location>
        <begin position="751"/>
        <end position="780"/>
    </location>
</feature>
<feature type="region of interest" description="Disordered" evidence="2">
    <location>
        <begin position="891"/>
        <end position="1008"/>
    </location>
</feature>
<feature type="region of interest" description="Disordered" evidence="2">
    <location>
        <begin position="1106"/>
        <end position="1180"/>
    </location>
</feature>
<feature type="coiled-coil region" evidence="1">
    <location>
        <begin position="837"/>
        <end position="860"/>
    </location>
</feature>
<feature type="coiled-coil region" evidence="1">
    <location>
        <begin position="1401"/>
        <end position="1435"/>
    </location>
</feature>
<feature type="compositionally biased region" description="Low complexity" evidence="2">
    <location>
        <begin position="287"/>
        <end position="307"/>
    </location>
</feature>
<feature type="compositionally biased region" description="Basic and acidic residues" evidence="2">
    <location>
        <begin position="911"/>
        <end position="920"/>
    </location>
</feature>
<feature type="compositionally biased region" description="Low complexity" evidence="2">
    <location>
        <begin position="985"/>
        <end position="995"/>
    </location>
</feature>
<feature type="compositionally biased region" description="Low complexity" evidence="2">
    <location>
        <begin position="1134"/>
        <end position="1150"/>
    </location>
</feature>
<feature type="compositionally biased region" description="Polar residues" evidence="2">
    <location>
        <begin position="1151"/>
        <end position="1180"/>
    </location>
</feature>
<feature type="modified residue" description="Phosphoserine" evidence="9">
    <location>
        <position position="444"/>
    </location>
</feature>
<feature type="modified residue" description="Phosphoserine" evidence="9">
    <location>
        <position position="446"/>
    </location>
</feature>
<feature type="modified residue" description="Phosphoserine" evidence="9">
    <location>
        <position position="755"/>
    </location>
</feature>
<feature type="modified residue" description="Phosphoserine" evidence="9">
    <location>
        <position position="758"/>
    </location>
</feature>
<feature type="modified residue" description="Phosphoserine" evidence="9">
    <location>
        <position position="988"/>
    </location>
</feature>
<feature type="modified residue" description="Phosphoserine" evidence="9">
    <location>
        <position position="1103"/>
    </location>
</feature>
<feature type="modified residue" description="Phosphoserine" evidence="7 8 9">
    <location>
        <position position="1106"/>
    </location>
</feature>
<feature type="sequence variant" id="VAR_051474" description="In dbSNP:rs16894945.">
    <original>K</original>
    <variation>N</variation>
    <location>
        <position position="404"/>
    </location>
</feature>
<feature type="sequence variant" id="VAR_051475" description="In dbSNP:rs11755393.">
    <original>Q</original>
    <variation>R</variation>
    <location>
        <position position="454"/>
    </location>
</feature>
<feature type="sequence variant" id="VAR_051476" description="In dbSNP:rs3734265.">
    <original>K</original>
    <variation>E</variation>
    <location>
        <position position="854"/>
    </location>
</feature>
<feature type="sequence variant" id="VAR_051477" description="In dbSNP:rs9469913.">
    <original>Q</original>
    <variation>H</variation>
    <location>
        <position position="984"/>
    </location>
</feature>
<feature type="sequence variant" id="VAR_051478" description="In dbSNP:rs13205210.">
    <original>M</original>
    <variation>T</variation>
    <location>
        <position position="1098"/>
    </location>
</feature>
<organism>
    <name type="scientific">Homo sapiens</name>
    <name type="common">Human</name>
    <dbReference type="NCBI Taxonomy" id="9606"/>
    <lineage>
        <taxon>Eukaryota</taxon>
        <taxon>Metazoa</taxon>
        <taxon>Chordata</taxon>
        <taxon>Craniata</taxon>
        <taxon>Vertebrata</taxon>
        <taxon>Euteleostomi</taxon>
        <taxon>Mammalia</taxon>
        <taxon>Eutheria</taxon>
        <taxon>Euarchontoglires</taxon>
        <taxon>Primates</taxon>
        <taxon>Haplorrhini</taxon>
        <taxon>Catarrhini</taxon>
        <taxon>Hominidae</taxon>
        <taxon>Homo</taxon>
    </lineage>
</organism>
<reference key="1">
    <citation type="journal article" date="2004" name="Oncogene">
        <title>ICBP90, an E2F-1 target, recruits HDAC1 and binds to methyl-CpG through its SRA domain.</title>
        <authorList>
            <person name="Unoki M."/>
            <person name="Nishidate T."/>
            <person name="Nakamura Y."/>
        </authorList>
    </citation>
    <scope>NUCLEOTIDE SEQUENCE [MRNA]</scope>
    <scope>IDENTIFICATION BY MASS SPECTROMETRY</scope>
    <scope>INTERACTION WITH UHRF1</scope>
    <scope>SUBUNIT</scope>
</reference>
<reference key="2">
    <citation type="journal article" date="2003" name="Nature">
        <title>The DNA sequence and analysis of human chromosome 6.</title>
        <authorList>
            <person name="Mungall A.J."/>
            <person name="Palmer S.A."/>
            <person name="Sims S.K."/>
            <person name="Edwards C.A."/>
            <person name="Ashurst J.L."/>
            <person name="Wilming L."/>
            <person name="Jones M.C."/>
            <person name="Horton R."/>
            <person name="Hunt S.E."/>
            <person name="Scott C.E."/>
            <person name="Gilbert J.G.R."/>
            <person name="Clamp M.E."/>
            <person name="Bethel G."/>
            <person name="Milne S."/>
            <person name="Ainscough R."/>
            <person name="Almeida J.P."/>
            <person name="Ambrose K.D."/>
            <person name="Andrews T.D."/>
            <person name="Ashwell R.I.S."/>
            <person name="Babbage A.K."/>
            <person name="Bagguley C.L."/>
            <person name="Bailey J."/>
            <person name="Banerjee R."/>
            <person name="Barker D.J."/>
            <person name="Barlow K.F."/>
            <person name="Bates K."/>
            <person name="Beare D.M."/>
            <person name="Beasley H."/>
            <person name="Beasley O."/>
            <person name="Bird C.P."/>
            <person name="Blakey S.E."/>
            <person name="Bray-Allen S."/>
            <person name="Brook J."/>
            <person name="Brown A.J."/>
            <person name="Brown J.Y."/>
            <person name="Burford D.C."/>
            <person name="Burrill W."/>
            <person name="Burton J."/>
            <person name="Carder C."/>
            <person name="Carter N.P."/>
            <person name="Chapman J.C."/>
            <person name="Clark S.Y."/>
            <person name="Clark G."/>
            <person name="Clee C.M."/>
            <person name="Clegg S."/>
            <person name="Cobley V."/>
            <person name="Collier R.E."/>
            <person name="Collins J.E."/>
            <person name="Colman L.K."/>
            <person name="Corby N.R."/>
            <person name="Coville G.J."/>
            <person name="Culley K.M."/>
            <person name="Dhami P."/>
            <person name="Davies J."/>
            <person name="Dunn M."/>
            <person name="Earthrowl M.E."/>
            <person name="Ellington A.E."/>
            <person name="Evans K.A."/>
            <person name="Faulkner L."/>
            <person name="Francis M.D."/>
            <person name="Frankish A."/>
            <person name="Frankland J."/>
            <person name="French L."/>
            <person name="Garner P."/>
            <person name="Garnett J."/>
            <person name="Ghori M.J."/>
            <person name="Gilby L.M."/>
            <person name="Gillson C.J."/>
            <person name="Glithero R.J."/>
            <person name="Grafham D.V."/>
            <person name="Grant M."/>
            <person name="Gribble S."/>
            <person name="Griffiths C."/>
            <person name="Griffiths M.N.D."/>
            <person name="Hall R."/>
            <person name="Halls K.S."/>
            <person name="Hammond S."/>
            <person name="Harley J.L."/>
            <person name="Hart E.A."/>
            <person name="Heath P.D."/>
            <person name="Heathcott R."/>
            <person name="Holmes S.J."/>
            <person name="Howden P.J."/>
            <person name="Howe K.L."/>
            <person name="Howell G.R."/>
            <person name="Huckle E."/>
            <person name="Humphray S.J."/>
            <person name="Humphries M.D."/>
            <person name="Hunt A.R."/>
            <person name="Johnson C.M."/>
            <person name="Joy A.A."/>
            <person name="Kay M."/>
            <person name="Keenan S.J."/>
            <person name="Kimberley A.M."/>
            <person name="King A."/>
            <person name="Laird G.K."/>
            <person name="Langford C."/>
            <person name="Lawlor S."/>
            <person name="Leongamornlert D.A."/>
            <person name="Leversha M."/>
            <person name="Lloyd C.R."/>
            <person name="Lloyd D.M."/>
            <person name="Loveland J.E."/>
            <person name="Lovell J."/>
            <person name="Martin S."/>
            <person name="Mashreghi-Mohammadi M."/>
            <person name="Maslen G.L."/>
            <person name="Matthews L."/>
            <person name="McCann O.T."/>
            <person name="McLaren S.J."/>
            <person name="McLay K."/>
            <person name="McMurray A."/>
            <person name="Moore M.J.F."/>
            <person name="Mullikin J.C."/>
            <person name="Niblett D."/>
            <person name="Nickerson T."/>
            <person name="Novik K.L."/>
            <person name="Oliver K."/>
            <person name="Overton-Larty E.K."/>
            <person name="Parker A."/>
            <person name="Patel R."/>
            <person name="Pearce A.V."/>
            <person name="Peck A.I."/>
            <person name="Phillimore B.J.C.T."/>
            <person name="Phillips S."/>
            <person name="Plumb R.W."/>
            <person name="Porter K.M."/>
            <person name="Ramsey Y."/>
            <person name="Ranby S.A."/>
            <person name="Rice C.M."/>
            <person name="Ross M.T."/>
            <person name="Searle S.M."/>
            <person name="Sehra H.K."/>
            <person name="Sheridan E."/>
            <person name="Skuce C.D."/>
            <person name="Smith S."/>
            <person name="Smith M."/>
            <person name="Spraggon L."/>
            <person name="Squares S.L."/>
            <person name="Steward C.A."/>
            <person name="Sycamore N."/>
            <person name="Tamlyn-Hall G."/>
            <person name="Tester J."/>
            <person name="Theaker A.J."/>
            <person name="Thomas D.W."/>
            <person name="Thorpe A."/>
            <person name="Tracey A."/>
            <person name="Tromans A."/>
            <person name="Tubby B."/>
            <person name="Wall M."/>
            <person name="Wallis J.M."/>
            <person name="West A.P."/>
            <person name="White S.S."/>
            <person name="Whitehead S.L."/>
            <person name="Whittaker H."/>
            <person name="Wild A."/>
            <person name="Willey D.J."/>
            <person name="Wilmer T.E."/>
            <person name="Wood J.M."/>
            <person name="Wray P.W."/>
            <person name="Wyatt J.C."/>
            <person name="Young L."/>
            <person name="Younger R.M."/>
            <person name="Bentley D.R."/>
            <person name="Coulson A."/>
            <person name="Durbin R.M."/>
            <person name="Hubbard T."/>
            <person name="Sulston J.E."/>
            <person name="Dunham I."/>
            <person name="Rogers J."/>
            <person name="Beck S."/>
        </authorList>
    </citation>
    <scope>NUCLEOTIDE SEQUENCE [LARGE SCALE GENOMIC DNA]</scope>
</reference>
<reference key="3">
    <citation type="journal article" date="2004" name="Nat. Genet.">
        <title>Complete sequencing and characterization of 21,243 full-length human cDNAs.</title>
        <authorList>
            <person name="Ota T."/>
            <person name="Suzuki Y."/>
            <person name="Nishikawa T."/>
            <person name="Otsuki T."/>
            <person name="Sugiyama T."/>
            <person name="Irie R."/>
            <person name="Wakamatsu A."/>
            <person name="Hayashi K."/>
            <person name="Sato H."/>
            <person name="Nagai K."/>
            <person name="Kimura K."/>
            <person name="Makita H."/>
            <person name="Sekine M."/>
            <person name="Obayashi M."/>
            <person name="Nishi T."/>
            <person name="Shibahara T."/>
            <person name="Tanaka T."/>
            <person name="Ishii S."/>
            <person name="Yamamoto J."/>
            <person name="Saito K."/>
            <person name="Kawai Y."/>
            <person name="Isono Y."/>
            <person name="Nakamura Y."/>
            <person name="Nagahari K."/>
            <person name="Murakami K."/>
            <person name="Yasuda T."/>
            <person name="Iwayanagi T."/>
            <person name="Wagatsuma M."/>
            <person name="Shiratori A."/>
            <person name="Sudo H."/>
            <person name="Hosoiri T."/>
            <person name="Kaku Y."/>
            <person name="Kodaira H."/>
            <person name="Kondo H."/>
            <person name="Sugawara M."/>
            <person name="Takahashi M."/>
            <person name="Kanda K."/>
            <person name="Yokoi T."/>
            <person name="Furuya T."/>
            <person name="Kikkawa E."/>
            <person name="Omura Y."/>
            <person name="Abe K."/>
            <person name="Kamihara K."/>
            <person name="Katsuta N."/>
            <person name="Sato K."/>
            <person name="Tanikawa M."/>
            <person name="Yamazaki M."/>
            <person name="Ninomiya K."/>
            <person name="Ishibashi T."/>
            <person name="Yamashita H."/>
            <person name="Murakawa K."/>
            <person name="Fujimori K."/>
            <person name="Tanai H."/>
            <person name="Kimata M."/>
            <person name="Watanabe M."/>
            <person name="Hiraoka S."/>
            <person name="Chiba Y."/>
            <person name="Ishida S."/>
            <person name="Ono Y."/>
            <person name="Takiguchi S."/>
            <person name="Watanabe S."/>
            <person name="Yosida M."/>
            <person name="Hotuta T."/>
            <person name="Kusano J."/>
            <person name="Kanehori K."/>
            <person name="Takahashi-Fujii A."/>
            <person name="Hara H."/>
            <person name="Tanase T.-O."/>
            <person name="Nomura Y."/>
            <person name="Togiya S."/>
            <person name="Komai F."/>
            <person name="Hara R."/>
            <person name="Takeuchi K."/>
            <person name="Arita M."/>
            <person name="Imose N."/>
            <person name="Musashino K."/>
            <person name="Yuuki H."/>
            <person name="Oshima A."/>
            <person name="Sasaki N."/>
            <person name="Aotsuka S."/>
            <person name="Yoshikawa Y."/>
            <person name="Matsunawa H."/>
            <person name="Ichihara T."/>
            <person name="Shiohata N."/>
            <person name="Sano S."/>
            <person name="Moriya S."/>
            <person name="Momiyama H."/>
            <person name="Satoh N."/>
            <person name="Takami S."/>
            <person name="Terashima Y."/>
            <person name="Suzuki O."/>
            <person name="Nakagawa S."/>
            <person name="Senoh A."/>
            <person name="Mizoguchi H."/>
            <person name="Goto Y."/>
            <person name="Shimizu F."/>
            <person name="Wakebe H."/>
            <person name="Hishigaki H."/>
            <person name="Watanabe T."/>
            <person name="Sugiyama A."/>
            <person name="Takemoto M."/>
            <person name="Kawakami B."/>
            <person name="Yamazaki M."/>
            <person name="Watanabe K."/>
            <person name="Kumagai A."/>
            <person name="Itakura S."/>
            <person name="Fukuzumi Y."/>
            <person name="Fujimori Y."/>
            <person name="Komiyama M."/>
            <person name="Tashiro H."/>
            <person name="Tanigami A."/>
            <person name="Fujiwara T."/>
            <person name="Ono T."/>
            <person name="Yamada K."/>
            <person name="Fujii Y."/>
            <person name="Ozaki K."/>
            <person name="Hirao M."/>
            <person name="Ohmori Y."/>
            <person name="Kawabata A."/>
            <person name="Hikiji T."/>
            <person name="Kobatake N."/>
            <person name="Inagaki H."/>
            <person name="Ikema Y."/>
            <person name="Okamoto S."/>
            <person name="Okitani R."/>
            <person name="Kawakami T."/>
            <person name="Noguchi S."/>
            <person name="Itoh T."/>
            <person name="Shigeta K."/>
            <person name="Senba T."/>
            <person name="Matsumura K."/>
            <person name="Nakajima Y."/>
            <person name="Mizuno T."/>
            <person name="Morinaga M."/>
            <person name="Sasaki M."/>
            <person name="Togashi T."/>
            <person name="Oyama M."/>
            <person name="Hata H."/>
            <person name="Watanabe M."/>
            <person name="Komatsu T."/>
            <person name="Mizushima-Sugano J."/>
            <person name="Satoh T."/>
            <person name="Shirai Y."/>
            <person name="Takahashi Y."/>
            <person name="Nakagawa K."/>
            <person name="Okumura K."/>
            <person name="Nagase T."/>
            <person name="Nomura N."/>
            <person name="Kikuchi H."/>
            <person name="Masuho Y."/>
            <person name="Yamashita R."/>
            <person name="Nakai K."/>
            <person name="Yada T."/>
            <person name="Nakamura Y."/>
            <person name="Ohara O."/>
            <person name="Isogai T."/>
            <person name="Sugano S."/>
        </authorList>
    </citation>
    <scope>NUCLEOTIDE SEQUENCE [LARGE SCALE MRNA] OF 1-678</scope>
</reference>
<reference key="4">
    <citation type="journal article" date="2008" name="Proc. Natl. Acad. Sci. U.S.A.">
        <title>A quantitative atlas of mitotic phosphorylation.</title>
        <authorList>
            <person name="Dephoure N."/>
            <person name="Zhou C."/>
            <person name="Villen J."/>
            <person name="Beausoleil S.A."/>
            <person name="Bakalarski C.E."/>
            <person name="Elledge S.J."/>
            <person name="Gygi S.P."/>
        </authorList>
    </citation>
    <scope>PHOSPHORYLATION [LARGE SCALE ANALYSIS] AT SER-1106</scope>
    <scope>IDENTIFICATION BY MASS SPECTROMETRY [LARGE SCALE ANALYSIS]</scope>
    <source>
        <tissue>Cervix carcinoma</tissue>
    </source>
</reference>
<reference key="5">
    <citation type="journal article" date="2009" name="Anal. Chem.">
        <title>Lys-N and trypsin cover complementary parts of the phosphoproteome in a refined SCX-based approach.</title>
        <authorList>
            <person name="Gauci S."/>
            <person name="Helbig A.O."/>
            <person name="Slijper M."/>
            <person name="Krijgsveld J."/>
            <person name="Heck A.J."/>
            <person name="Mohammed S."/>
        </authorList>
    </citation>
    <scope>IDENTIFICATION BY MASS SPECTROMETRY [LARGE SCALE ANALYSIS]</scope>
</reference>
<reference key="6">
    <citation type="journal article" date="2009" name="Sci. Signal.">
        <title>Quantitative phosphoproteomic analysis of T cell receptor signaling reveals system-wide modulation of protein-protein interactions.</title>
        <authorList>
            <person name="Mayya V."/>
            <person name="Lundgren D.H."/>
            <person name="Hwang S.-I."/>
            <person name="Rezaul K."/>
            <person name="Wu L."/>
            <person name="Eng J.K."/>
            <person name="Rodionov V."/>
            <person name="Han D.K."/>
        </authorList>
    </citation>
    <scope>PHOSPHORYLATION [LARGE SCALE ANALYSIS] AT SER-1106</scope>
    <scope>IDENTIFICATION BY MASS SPECTROMETRY [LARGE SCALE ANALYSIS]</scope>
    <source>
        <tissue>Leukemic T-cell</tissue>
    </source>
</reference>
<reference key="7">
    <citation type="journal article" date="2010" name="Sci. Signal.">
        <title>Quantitative phosphoproteomics reveals widespread full phosphorylation site occupancy during mitosis.</title>
        <authorList>
            <person name="Olsen J.V."/>
            <person name="Vermeulen M."/>
            <person name="Santamaria A."/>
            <person name="Kumar C."/>
            <person name="Miller M.L."/>
            <person name="Jensen L.J."/>
            <person name="Gnad F."/>
            <person name="Cox J."/>
            <person name="Jensen T.S."/>
            <person name="Nigg E.A."/>
            <person name="Brunak S."/>
            <person name="Mann M."/>
        </authorList>
    </citation>
    <scope>IDENTIFICATION BY MASS SPECTROMETRY [LARGE SCALE ANALYSIS]</scope>
    <source>
        <tissue>Cervix carcinoma</tissue>
    </source>
</reference>
<reference key="8">
    <citation type="journal article" date="2013" name="J. Proteome Res.">
        <title>Toward a comprehensive characterization of a human cancer cell phosphoproteome.</title>
        <authorList>
            <person name="Zhou H."/>
            <person name="Di Palma S."/>
            <person name="Preisinger C."/>
            <person name="Peng M."/>
            <person name="Polat A.N."/>
            <person name="Heck A.J."/>
            <person name="Mohammed S."/>
        </authorList>
    </citation>
    <scope>PHOSPHORYLATION [LARGE SCALE ANALYSIS] AT SER-444; SER-446; SER-755; SER-758; SER-988; SER-1103 AND SER-1106</scope>
    <scope>IDENTIFICATION BY MASS SPECTROMETRY [LARGE SCALE ANALYSIS]</scope>
    <source>
        <tissue>Cervix carcinoma</tissue>
        <tissue>Erythroleukemia</tissue>
    </source>
</reference>
<reference key="9">
    <citation type="journal article" date="2014" name="J. Proteomics">
        <title>An enzyme assisted RP-RPLC approach for in-depth analysis of human liver phosphoproteome.</title>
        <authorList>
            <person name="Bian Y."/>
            <person name="Song C."/>
            <person name="Cheng K."/>
            <person name="Dong M."/>
            <person name="Wang F."/>
            <person name="Huang J."/>
            <person name="Sun D."/>
            <person name="Wang L."/>
            <person name="Ye M."/>
            <person name="Zou H."/>
        </authorList>
    </citation>
    <scope>IDENTIFICATION BY MASS SPECTROMETRY [LARGE SCALE ANALYSIS]</scope>
    <source>
        <tissue>Liver</tissue>
    </source>
</reference>
<reference key="10">
    <citation type="journal article" date="2022" name="J. Cell Biol.">
        <title>SHIP164 is a chorein motif lipid transfer protein that controls endosome-Golgi membrane traffic.</title>
        <authorList>
            <person name="Hanna M.G."/>
            <person name="Suen P.H."/>
            <person name="Wu Y."/>
            <person name="Reinisch K.M."/>
            <person name="De Camilli P."/>
        </authorList>
    </citation>
    <scope>FUNCTION</scope>
    <scope>SUBCELLULAR LOCATION</scope>
</reference>
<reference key="11">
    <citation type="journal article" date="2022" name="Trends Cell Biol.">
        <title>A novel superfamily of bridge-like lipid transfer proteins.</title>
        <authorList>
            <person name="Neuman S.D."/>
            <person name="Levine T.P."/>
            <person name="Bashirullah A."/>
        </authorList>
    </citation>
    <scope>REVIEW OF FUNCTION</scope>
</reference>
<keyword id="KW-0175">Coiled coil</keyword>
<keyword id="KW-0967">Endosome</keyword>
<keyword id="KW-0597">Phosphoprotein</keyword>
<keyword id="KW-1267">Proteomics identification</keyword>
<keyword id="KW-1185">Reference proteome</keyword>
<evidence type="ECO:0000255" key="1"/>
<evidence type="ECO:0000256" key="2">
    <source>
        <dbReference type="SAM" id="MobiDB-lite"/>
    </source>
</evidence>
<evidence type="ECO:0000269" key="3">
    <source>
    </source>
</evidence>
<evidence type="ECO:0000269" key="4">
    <source>
    </source>
</evidence>
<evidence type="ECO:0000305" key="5"/>
<evidence type="ECO:0000312" key="6">
    <source>
        <dbReference type="HGNC" id="HGNC:21216"/>
    </source>
</evidence>
<evidence type="ECO:0007744" key="7">
    <source>
    </source>
</evidence>
<evidence type="ECO:0007744" key="8">
    <source>
    </source>
</evidence>
<evidence type="ECO:0007744" key="9">
    <source>
    </source>
</evidence>
<proteinExistence type="evidence at protein level"/>
<gene>
    <name evidence="6" type="primary">BLTP3A</name>
    <name type="synonym">C6orf107</name>
    <name type="synonym">UHRF1BP1</name>
</gene>
<protein>
    <recommendedName>
        <fullName evidence="5">Bridge-like lipid transfer protein family member 3A</fullName>
    </recommendedName>
    <alternativeName>
        <fullName>ICBP90-binding protein 1</fullName>
    </alternativeName>
    <alternativeName>
        <fullName>UHRF1-binding protein 1</fullName>
    </alternativeName>
    <alternativeName>
        <fullName>Ubiquitin-like containing PHD and RING finger domains 1-binding protein 1</fullName>
    </alternativeName>
</protein>
<sequence>MAGIIKKQILKHLSRFTKNLSPDKINLSTLKGEGQLTNLELDEEVLQNVLELPTWLAITRVYCNRASIRIQWTKLKTHPICLCLDKVEVEMKTCEDPRPPNGQSPIALASGQSEYGFAEKVVEGMFIIVNSITIKIHSKAFHASFELWQLQGYSVNPNWQQSDLRLTRITDPCRGEVLTFKEITWQTLRIEADATDNGDQDPVTTPLRLITNQGRIQIALKRRTKDCNVISSKLMFLLDDLLWVLTDSQLKAMMKYAESLSEAMEKSAHQRKSLAPEPVQITPPAPSAQQSWAQAFGGSQGNSNSSSSRLSQYFEKFDVKESSYHLLISRLDLHICDDSQSREPGVSANRLMGGAMQLTFRKMAFDYYPFHWAGDSCKHWVRHCEAMETRGQWAQKLVMEFQSKMEKWHEETGLKPPWHLGVDSLFRRKADSLSSPRKNPLERSPSQGRQPAFQPPAWNRLRSSCMVVRVDDLDIHQVSTAGQPSKKPSTLLSCSRKLHNLPTQVSAIHIEFTEYYFPDNQELPVPCPNLYIQLNGLTFTMDPVSLLWGNLFCLDLYRSLEQFKAIYKLEDSSQKDEHLDIRLDAFWLKVSFPLEKRERAELHRPQALVFSASGMIATNTRHAPHCSCSDLQSLFRGFAAAEFFHSNYDHFPKVPGGFSLLHMLFLHHAFQMDSCLPQPNTLPPQRPKASWDLWSVHFTQISLDFEGTENFKGHTLNFVAPFPLSIWACLPLRWQQAQARKLLLASEGRLKPSASFGSPVQSEALAPDSMSHPRSKTEHDLKSLSGLTEVMEILKEGSSGMDNKGPLTELEDVADVHMLVHSPAHVRVRLDHYQYLALLRLKEVLQRLQEQLTKDTESMTGSPLQNQTACIGVLFPSAEVALLMHPAPGAVDADSAGSDSTSLVDSELSPSEDRELKSDASSDQGPASPEKVLEESSIENQDVSQERPHSNGELQDSGPLAQQLAGKGHEAVESLQAKKLSRTQASSSPAALKPPAGRETAVNGQGELIPLKNIEGELSSAIHMTKDATKEALHATMDLTKEAVSLTKDAFSLGRDRMTSTMHKMLSLPPAKEPMAKTDEGVAAPVSGGAARLRFFSMKRTVSQQSFDGVSLDSSGPEDRISVDSDGSDSFVMLLESESGPESVPPGSLSNVSDNAGVQGSPLVNNYGQGSPAANSSVSPSGEDLIFHPVSVLVLKVNEVSFGIEVRGEDLTVALQAEELTLQQLGTVGLWQFLHGQCPGTCFQESSTLKTGHIRPAVGLRFEVGPGAAVHSPLASQNGFLHLLLHGCDLELLTSVLSGLGPFLEDEEIPVVVPMQIELLNSSITLKDDIPPIYPTSPGPIPITLAMEHVVLKRSDDGVFHIGAAAQDKPSAEVLKSEKRQPPKEQVFLVPTGEVFEQQVKELPILQKELIETKQALANANQDKEKLLQEIRKYNPFFEL</sequence>
<comment type="function">
    <text evidence="4">Tube-forming lipid transport protein which probably mediates the transfer of lipids between membranes at organelle contact sites (PubMed:35499567). May be involved in the retrograde traffic of vesicle clusters in the endocytic pathway to the Golgi complex (PubMed:35499567).</text>
</comment>
<comment type="subunit">
    <text evidence="3 5">Homodimer (Potential). Interacts with UHRF1.</text>
</comment>
<comment type="subcellular location">
    <subcellularLocation>
        <location evidence="4">Late endosome</location>
    </subcellularLocation>
</comment>
<comment type="sequence caution" evidence="5">
    <conflict type="miscellaneous discrepancy">
        <sequence resource="EMBL-CDS" id="BAA91074"/>
    </conflict>
    <text>Chimeric cDNA.</text>
</comment>
<dbReference type="EMBL" id="AB126777">
    <property type="protein sequence ID" value="BAD32740.1"/>
    <property type="molecule type" value="mRNA"/>
</dbReference>
<dbReference type="EMBL" id="AL139100">
    <property type="status" value="NOT_ANNOTATED_CDS"/>
    <property type="molecule type" value="Genomic_DNA"/>
</dbReference>
<dbReference type="EMBL" id="AL033520">
    <property type="status" value="NOT_ANNOTATED_CDS"/>
    <property type="molecule type" value="Genomic_DNA"/>
</dbReference>
<dbReference type="EMBL" id="AK000309">
    <property type="protein sequence ID" value="BAA91074.1"/>
    <property type="status" value="ALT_SEQ"/>
    <property type="molecule type" value="mRNA"/>
</dbReference>
<dbReference type="CCDS" id="CCDS43455.1"/>
<dbReference type="RefSeq" id="NP_060224.3">
    <property type="nucleotide sequence ID" value="NM_017754.3"/>
</dbReference>
<dbReference type="SMR" id="Q6BDS2"/>
<dbReference type="BioGRID" id="120235">
    <property type="interactions" value="95"/>
</dbReference>
<dbReference type="FunCoup" id="Q6BDS2">
    <property type="interactions" value="1172"/>
</dbReference>
<dbReference type="IntAct" id="Q6BDS2">
    <property type="interactions" value="62"/>
</dbReference>
<dbReference type="MINT" id="Q6BDS2"/>
<dbReference type="STRING" id="9606.ENSP00000192788"/>
<dbReference type="TCDB" id="1.R.2.1.2">
    <property type="family name" value="the bridge-like lipid transfer protein (bltp) family"/>
</dbReference>
<dbReference type="GlyGen" id="Q6BDS2">
    <property type="glycosylation" value="3 sites, 1 O-linked glycan (1 site)"/>
</dbReference>
<dbReference type="iPTMnet" id="Q6BDS2"/>
<dbReference type="PhosphoSitePlus" id="Q6BDS2"/>
<dbReference type="BioMuta" id="UHRF1BP1"/>
<dbReference type="DMDM" id="67462038"/>
<dbReference type="jPOST" id="Q6BDS2"/>
<dbReference type="MassIVE" id="Q6BDS2"/>
<dbReference type="PaxDb" id="9606-ENSP00000192788"/>
<dbReference type="PeptideAtlas" id="Q6BDS2"/>
<dbReference type="ProteomicsDB" id="66219"/>
<dbReference type="Pumba" id="Q6BDS2"/>
<dbReference type="Antibodypedia" id="49429">
    <property type="antibodies" value="60 antibodies from 22 providers"/>
</dbReference>
<dbReference type="DNASU" id="54887"/>
<dbReference type="Ensembl" id="ENST00000192788.6">
    <property type="protein sequence ID" value="ENSP00000192788.5"/>
    <property type="gene ID" value="ENSG00000065060.18"/>
</dbReference>
<dbReference type="GeneID" id="54887"/>
<dbReference type="KEGG" id="hsa:54887"/>
<dbReference type="MANE-Select" id="ENST00000192788.6">
    <property type="protein sequence ID" value="ENSP00000192788.5"/>
    <property type="RefSeq nucleotide sequence ID" value="NM_017754.4"/>
    <property type="RefSeq protein sequence ID" value="NP_060224.3"/>
</dbReference>
<dbReference type="UCSC" id="uc003oju.5">
    <property type="organism name" value="human"/>
</dbReference>
<dbReference type="AGR" id="HGNC:21216"/>
<dbReference type="CTD" id="54887"/>
<dbReference type="DisGeNET" id="54887"/>
<dbReference type="GeneCards" id="BLTP3A"/>
<dbReference type="HGNC" id="HGNC:21216">
    <property type="gene designation" value="BLTP3A"/>
</dbReference>
<dbReference type="HPA" id="ENSG00000065060">
    <property type="expression patterns" value="Low tissue specificity"/>
</dbReference>
<dbReference type="MIM" id="619570">
    <property type="type" value="gene"/>
</dbReference>
<dbReference type="neXtProt" id="NX_Q6BDS2"/>
<dbReference type="OpenTargets" id="ENSG00000065060"/>
<dbReference type="PharmGKB" id="PA162408530"/>
<dbReference type="VEuPathDB" id="HostDB:ENSG00000065060"/>
<dbReference type="eggNOG" id="KOG2955">
    <property type="taxonomic scope" value="Eukaryota"/>
</dbReference>
<dbReference type="GeneTree" id="ENSGT00600000084428"/>
<dbReference type="InParanoid" id="Q6BDS2"/>
<dbReference type="OMA" id="HSLISCN"/>
<dbReference type="OrthoDB" id="43807at2759"/>
<dbReference type="PAN-GO" id="Q6BDS2">
    <property type="GO annotations" value="1 GO annotation based on evolutionary models"/>
</dbReference>
<dbReference type="PhylomeDB" id="Q6BDS2"/>
<dbReference type="TreeFam" id="TF314874"/>
<dbReference type="PathwayCommons" id="Q6BDS2"/>
<dbReference type="SignaLink" id="Q6BDS2"/>
<dbReference type="BioGRID-ORCS" id="54887">
    <property type="hits" value="8 hits in 1153 CRISPR screens"/>
</dbReference>
<dbReference type="ChiTaRS" id="UHRF1BP1">
    <property type="organism name" value="human"/>
</dbReference>
<dbReference type="GenomeRNAi" id="54887"/>
<dbReference type="Pharos" id="Q6BDS2">
    <property type="development level" value="Tbio"/>
</dbReference>
<dbReference type="PRO" id="PR:Q6BDS2"/>
<dbReference type="Proteomes" id="UP000005640">
    <property type="component" value="Chromosome 6"/>
</dbReference>
<dbReference type="RNAct" id="Q6BDS2">
    <property type="molecule type" value="protein"/>
</dbReference>
<dbReference type="Bgee" id="ENSG00000065060">
    <property type="expression patterns" value="Expressed in left ventricle myocardium and 192 other cell types or tissues"/>
</dbReference>
<dbReference type="ExpressionAtlas" id="Q6BDS2">
    <property type="expression patterns" value="baseline and differential"/>
</dbReference>
<dbReference type="GO" id="GO:0005770">
    <property type="term" value="C:late endosome"/>
    <property type="evidence" value="ECO:0000314"/>
    <property type="project" value="UniProtKB"/>
</dbReference>
<dbReference type="GO" id="GO:0042826">
    <property type="term" value="F:histone deacetylase binding"/>
    <property type="evidence" value="ECO:0000353"/>
    <property type="project" value="BHF-UCL"/>
</dbReference>
<dbReference type="GO" id="GO:0042802">
    <property type="term" value="F:identical protein binding"/>
    <property type="evidence" value="ECO:0000353"/>
    <property type="project" value="BHF-UCL"/>
</dbReference>
<dbReference type="InterPro" id="IPR026728">
    <property type="entry name" value="BLTP3A/B"/>
</dbReference>
<dbReference type="PANTHER" id="PTHR22774:SF15">
    <property type="entry name" value="BRIDGE-LIKE LIPID TRANSFER PROTEIN FAMILY MEMBER 3A"/>
    <property type="match status" value="1"/>
</dbReference>
<dbReference type="PANTHER" id="PTHR22774">
    <property type="entry name" value="CHOREIN N-TERMINAL DOMAIN-CONTAINING PROTEIN"/>
    <property type="match status" value="1"/>
</dbReference>
<dbReference type="Pfam" id="PF24917">
    <property type="entry name" value="BLTP3A_B"/>
    <property type="match status" value="1"/>
</dbReference>
<accession>Q6BDS2</accession>
<accession>Q9NXE0</accession>